<proteinExistence type="inferred from homology"/>
<accession>A8YVM8</accession>
<organism>
    <name type="scientific">Lactobacillus helveticus (strain DPC 4571)</name>
    <dbReference type="NCBI Taxonomy" id="405566"/>
    <lineage>
        <taxon>Bacteria</taxon>
        <taxon>Bacillati</taxon>
        <taxon>Bacillota</taxon>
        <taxon>Bacilli</taxon>
        <taxon>Lactobacillales</taxon>
        <taxon>Lactobacillaceae</taxon>
        <taxon>Lactobacillus</taxon>
    </lineage>
</organism>
<comment type="function">
    <text evidence="1">Single strand-specific metallo-endoribonuclease involved in late-stage 70S ribosome quality control and in maturation of the 3' terminus of the 16S rRNA.</text>
</comment>
<comment type="cofactor">
    <cofactor evidence="1">
        <name>Zn(2+)</name>
        <dbReference type="ChEBI" id="CHEBI:29105"/>
    </cofactor>
    <text evidence="1">Binds 1 zinc ion.</text>
</comment>
<comment type="subcellular location">
    <subcellularLocation>
        <location evidence="1">Cytoplasm</location>
    </subcellularLocation>
</comment>
<comment type="similarity">
    <text evidence="1">Belongs to the endoribonuclease YbeY family.</text>
</comment>
<gene>
    <name evidence="1" type="primary">ybeY</name>
    <name type="ordered locus">lhv_1302</name>
</gene>
<dbReference type="EC" id="3.1.-.-" evidence="1"/>
<dbReference type="EMBL" id="CP000517">
    <property type="protein sequence ID" value="ABX27315.1"/>
    <property type="molecule type" value="Genomic_DNA"/>
</dbReference>
<dbReference type="RefSeq" id="WP_012211977.1">
    <property type="nucleotide sequence ID" value="NC_010080.1"/>
</dbReference>
<dbReference type="SMR" id="A8YVM8"/>
<dbReference type="KEGG" id="lhe:lhv_1302"/>
<dbReference type="eggNOG" id="COG0319">
    <property type="taxonomic scope" value="Bacteria"/>
</dbReference>
<dbReference type="HOGENOM" id="CLU_106710_3_0_9"/>
<dbReference type="Proteomes" id="UP000000790">
    <property type="component" value="Chromosome"/>
</dbReference>
<dbReference type="GO" id="GO:0005737">
    <property type="term" value="C:cytoplasm"/>
    <property type="evidence" value="ECO:0007669"/>
    <property type="project" value="UniProtKB-SubCell"/>
</dbReference>
<dbReference type="GO" id="GO:0004222">
    <property type="term" value="F:metalloendopeptidase activity"/>
    <property type="evidence" value="ECO:0007669"/>
    <property type="project" value="InterPro"/>
</dbReference>
<dbReference type="GO" id="GO:0004521">
    <property type="term" value="F:RNA endonuclease activity"/>
    <property type="evidence" value="ECO:0007669"/>
    <property type="project" value="UniProtKB-UniRule"/>
</dbReference>
<dbReference type="GO" id="GO:0008270">
    <property type="term" value="F:zinc ion binding"/>
    <property type="evidence" value="ECO:0007669"/>
    <property type="project" value="UniProtKB-UniRule"/>
</dbReference>
<dbReference type="GO" id="GO:0006364">
    <property type="term" value="P:rRNA processing"/>
    <property type="evidence" value="ECO:0007669"/>
    <property type="project" value="UniProtKB-UniRule"/>
</dbReference>
<dbReference type="Gene3D" id="3.40.390.30">
    <property type="entry name" value="Metalloproteases ('zincins'), catalytic domain"/>
    <property type="match status" value="1"/>
</dbReference>
<dbReference type="HAMAP" id="MF_00009">
    <property type="entry name" value="Endoribonucl_YbeY"/>
    <property type="match status" value="1"/>
</dbReference>
<dbReference type="InterPro" id="IPR023091">
    <property type="entry name" value="MetalPrtase_cat_dom_sf_prd"/>
</dbReference>
<dbReference type="InterPro" id="IPR002036">
    <property type="entry name" value="YbeY"/>
</dbReference>
<dbReference type="InterPro" id="IPR020549">
    <property type="entry name" value="YbeY_CS"/>
</dbReference>
<dbReference type="NCBIfam" id="TIGR00043">
    <property type="entry name" value="rRNA maturation RNase YbeY"/>
    <property type="match status" value="1"/>
</dbReference>
<dbReference type="PANTHER" id="PTHR46986">
    <property type="entry name" value="ENDORIBONUCLEASE YBEY, CHLOROPLASTIC"/>
    <property type="match status" value="1"/>
</dbReference>
<dbReference type="PANTHER" id="PTHR46986:SF1">
    <property type="entry name" value="ENDORIBONUCLEASE YBEY, CHLOROPLASTIC"/>
    <property type="match status" value="1"/>
</dbReference>
<dbReference type="Pfam" id="PF02130">
    <property type="entry name" value="YbeY"/>
    <property type="match status" value="1"/>
</dbReference>
<dbReference type="SUPFAM" id="SSF55486">
    <property type="entry name" value="Metalloproteases ('zincins'), catalytic domain"/>
    <property type="match status" value="1"/>
</dbReference>
<dbReference type="PROSITE" id="PS01306">
    <property type="entry name" value="UPF0054"/>
    <property type="match status" value="1"/>
</dbReference>
<keyword id="KW-0963">Cytoplasm</keyword>
<keyword id="KW-0255">Endonuclease</keyword>
<keyword id="KW-0378">Hydrolase</keyword>
<keyword id="KW-0479">Metal-binding</keyword>
<keyword id="KW-0540">Nuclease</keyword>
<keyword id="KW-0690">Ribosome biogenesis</keyword>
<keyword id="KW-0698">rRNA processing</keyword>
<keyword id="KW-0862">Zinc</keyword>
<name>YBEY_LACH4</name>
<feature type="chain" id="PRO_1000070932" description="Endoribonuclease YbeY">
    <location>
        <begin position="1"/>
        <end position="174"/>
    </location>
</feature>
<feature type="binding site" evidence="1">
    <location>
        <position position="129"/>
    </location>
    <ligand>
        <name>Zn(2+)</name>
        <dbReference type="ChEBI" id="CHEBI:29105"/>
        <note>catalytic</note>
    </ligand>
</feature>
<feature type="binding site" evidence="1">
    <location>
        <position position="133"/>
    </location>
    <ligand>
        <name>Zn(2+)</name>
        <dbReference type="ChEBI" id="CHEBI:29105"/>
        <note>catalytic</note>
    </ligand>
</feature>
<feature type="binding site" evidence="1">
    <location>
        <position position="139"/>
    </location>
    <ligand>
        <name>Zn(2+)</name>
        <dbReference type="ChEBI" id="CHEBI:29105"/>
        <note>catalytic</note>
    </ligand>
</feature>
<protein>
    <recommendedName>
        <fullName evidence="1">Endoribonuclease YbeY</fullName>
        <ecNumber evidence="1">3.1.-.-</ecNumber>
    </recommendedName>
</protein>
<evidence type="ECO:0000255" key="1">
    <source>
        <dbReference type="HAMAP-Rule" id="MF_00009"/>
    </source>
</evidence>
<reference key="1">
    <citation type="journal article" date="2008" name="J. Bacteriol.">
        <title>Genome sequence of Lactobacillus helveticus: an organism distinguished by selective gene loss and IS element expansion.</title>
        <authorList>
            <person name="Callanan M."/>
            <person name="Kaleta P."/>
            <person name="O'Callaghan J."/>
            <person name="O'Sullivan O."/>
            <person name="Jordan K."/>
            <person name="McAuliffe O."/>
            <person name="Sangrador-Vegas A."/>
            <person name="Slattery L."/>
            <person name="Fitzgerald G.F."/>
            <person name="Beresford T."/>
            <person name="Ross R.P."/>
        </authorList>
    </citation>
    <scope>NUCLEOTIDE SEQUENCE [LARGE SCALE GENOMIC DNA]</scope>
    <source>
        <strain>DPC 4571</strain>
    </source>
</reference>
<sequence length="174" mass="20177">MDPIDVTYHDEVGFLDDKNRNWQDWIMKLLLLAKKEIGKDNNLEMSINFVDEDRSHEINLKYRDKDRPTDVISFAIEDGEDAIDLSVFEDDPDFQEDIGDLFMCPSVIKRHSKEYGTGFDREFGYTVVHGFLHLNGYDHIKPDEAKEMFGIQGKVLEECGLPLYPDQLDEGRGK</sequence>